<protein>
    <recommendedName>
        <fullName>Acetyl-coenzyme A carboxylase carboxyl transferase subunit alpha, chloroplastic</fullName>
        <shortName>ACCase subunit alpha</shortName>
        <shortName>Acetyl-CoA carboxylase carboxyltransferase subunit alpha</shortName>
        <ecNumber>2.1.3.15</ecNumber>
    </recommendedName>
    <alternativeName>
        <fullName>pIEP96</fullName>
    </alternativeName>
</protein>
<evidence type="ECO:0000250" key="1"/>
<evidence type="ECO:0000255" key="2"/>
<evidence type="ECO:0000255" key="3">
    <source>
        <dbReference type="PROSITE-ProRule" id="PRU01137"/>
    </source>
</evidence>
<evidence type="ECO:0000256" key="4">
    <source>
        <dbReference type="SAM" id="MobiDB-lite"/>
    </source>
</evidence>
<evidence type="ECO:0000269" key="5">
    <source>
    </source>
</evidence>
<evidence type="ECO:0000269" key="6">
    <source>
    </source>
</evidence>
<evidence type="ECO:0000269" key="7">
    <source>
    </source>
</evidence>
<evidence type="ECO:0000269" key="8">
    <source>
    </source>
</evidence>
<evidence type="ECO:0000269" key="9">
    <source>
    </source>
</evidence>
<evidence type="ECO:0000305" key="10"/>
<evidence type="ECO:0000305" key="11">
    <source>
    </source>
</evidence>
<evidence type="ECO:0000305" key="12">
    <source>
    </source>
</evidence>
<evidence type="ECO:0000305" key="13">
    <source>
    </source>
</evidence>
<dbReference type="EC" id="2.1.3.15"/>
<dbReference type="EMBL" id="Z31559">
    <property type="protein sequence ID" value="CAA83434.1"/>
    <property type="molecule type" value="mRNA"/>
</dbReference>
<dbReference type="EMBL" id="AB029556">
    <property type="protein sequence ID" value="BAA94752.1"/>
    <property type="molecule type" value="mRNA"/>
</dbReference>
<dbReference type="PIR" id="S56667">
    <property type="entry name" value="S56667"/>
</dbReference>
<dbReference type="SMR" id="Q41008"/>
<dbReference type="UniPathway" id="UPA00655">
    <property type="reaction ID" value="UER00711"/>
</dbReference>
<dbReference type="GO" id="GO:0009317">
    <property type="term" value="C:acetyl-CoA carboxylase complex"/>
    <property type="evidence" value="ECO:0007669"/>
    <property type="project" value="InterPro"/>
</dbReference>
<dbReference type="GO" id="GO:0009706">
    <property type="term" value="C:chloroplast inner membrane"/>
    <property type="evidence" value="ECO:0007669"/>
    <property type="project" value="UniProtKB-SubCell"/>
</dbReference>
<dbReference type="GO" id="GO:0003989">
    <property type="term" value="F:acetyl-CoA carboxylase activity"/>
    <property type="evidence" value="ECO:0007669"/>
    <property type="project" value="InterPro"/>
</dbReference>
<dbReference type="GO" id="GO:0005524">
    <property type="term" value="F:ATP binding"/>
    <property type="evidence" value="ECO:0007669"/>
    <property type="project" value="UniProtKB-KW"/>
</dbReference>
<dbReference type="GO" id="GO:0016743">
    <property type="term" value="F:carboxyl- or carbamoyltransferase activity"/>
    <property type="evidence" value="ECO:0007669"/>
    <property type="project" value="InterPro"/>
</dbReference>
<dbReference type="GO" id="GO:0006633">
    <property type="term" value="P:fatty acid biosynthetic process"/>
    <property type="evidence" value="ECO:0007669"/>
    <property type="project" value="UniProtKB-KW"/>
</dbReference>
<dbReference type="GO" id="GO:2001295">
    <property type="term" value="P:malonyl-CoA biosynthetic process"/>
    <property type="evidence" value="ECO:0007669"/>
    <property type="project" value="UniProtKB-UniPathway"/>
</dbReference>
<dbReference type="Gene3D" id="3.90.226.10">
    <property type="entry name" value="2-enoyl-CoA Hydratase, Chain A, domain 1"/>
    <property type="match status" value="1"/>
</dbReference>
<dbReference type="HAMAP" id="MF_00823">
    <property type="entry name" value="AcetylCoA_CT_alpha"/>
    <property type="match status" value="1"/>
</dbReference>
<dbReference type="InterPro" id="IPR001095">
    <property type="entry name" value="Acetyl_CoA_COase_a_su"/>
</dbReference>
<dbReference type="InterPro" id="IPR029045">
    <property type="entry name" value="ClpP/crotonase-like_dom_sf"/>
</dbReference>
<dbReference type="InterPro" id="IPR011763">
    <property type="entry name" value="COA_CT_C"/>
</dbReference>
<dbReference type="NCBIfam" id="TIGR00513">
    <property type="entry name" value="accA"/>
    <property type="match status" value="1"/>
</dbReference>
<dbReference type="NCBIfam" id="NF041504">
    <property type="entry name" value="AccA_sub"/>
    <property type="match status" value="1"/>
</dbReference>
<dbReference type="NCBIfam" id="NF004344">
    <property type="entry name" value="PRK05724.1"/>
    <property type="match status" value="1"/>
</dbReference>
<dbReference type="PANTHER" id="PTHR42853">
    <property type="entry name" value="ACETYL-COENZYME A CARBOXYLASE CARBOXYL TRANSFERASE SUBUNIT ALPHA"/>
    <property type="match status" value="1"/>
</dbReference>
<dbReference type="PANTHER" id="PTHR42853:SF3">
    <property type="entry name" value="ACETYL-COENZYME A CARBOXYLASE CARBOXYL TRANSFERASE SUBUNIT ALPHA, CHLOROPLASTIC"/>
    <property type="match status" value="1"/>
</dbReference>
<dbReference type="Pfam" id="PF03255">
    <property type="entry name" value="ACCA"/>
    <property type="match status" value="1"/>
</dbReference>
<dbReference type="PRINTS" id="PR01069">
    <property type="entry name" value="ACCCTRFRASEA"/>
</dbReference>
<dbReference type="SUPFAM" id="SSF52096">
    <property type="entry name" value="ClpP/crotonase"/>
    <property type="match status" value="1"/>
</dbReference>
<dbReference type="PROSITE" id="PS50989">
    <property type="entry name" value="COA_CT_CTER"/>
    <property type="match status" value="1"/>
</dbReference>
<accession>Q41008</accession>
<accession>Q9MBB4</accession>
<keyword id="KW-0067">ATP-binding</keyword>
<keyword id="KW-0150">Chloroplast</keyword>
<keyword id="KW-0175">Coiled coil</keyword>
<keyword id="KW-0903">Direct protein sequencing</keyword>
<keyword id="KW-1015">Disulfide bond</keyword>
<keyword id="KW-0275">Fatty acid biosynthesis</keyword>
<keyword id="KW-0276">Fatty acid metabolism</keyword>
<keyword id="KW-0444">Lipid biosynthesis</keyword>
<keyword id="KW-0443">Lipid metabolism</keyword>
<keyword id="KW-0472">Membrane</keyword>
<keyword id="KW-0547">Nucleotide-binding</keyword>
<keyword id="KW-0934">Plastid</keyword>
<keyword id="KW-1001">Plastid inner membrane</keyword>
<keyword id="KW-0808">Transferase</keyword>
<keyword id="KW-0809">Transit peptide</keyword>
<reference key="1">
    <citation type="journal article" date="1995" name="Plant Mol. Biol.">
        <title>Import of a new chloroplast inner envelope protein is greatly stimulated by potassium phosphate.</title>
        <authorList>
            <person name="Hirsch S."/>
            <person name="Soll J."/>
        </authorList>
    </citation>
    <scope>NUCLEOTIDE SEQUENCE [MRNA]</scope>
    <scope>VARIANTS SER-313; LEU-452 AND GLU-631</scope>
    <scope>SUBCELLULAR LOCATION</scope>
    <source>
        <strain>cv. Miranda</strain>
    </source>
</reference>
<reference key="2">
    <citation type="journal article" date="2000" name="J. Biol. Chem.">
        <title>Recombinant carboxyltransferase responsive to redox of pea plastidic acetyl-CoA carboxylase.</title>
        <authorList>
            <person name="Kozaki A."/>
            <person name="Kamada K."/>
            <person name="Nagano Y."/>
            <person name="Iguchi H."/>
            <person name="Sasaki Y."/>
        </authorList>
    </citation>
    <scope>NUCLEOTIDE SEQUENCE [MRNA] OF 51-875</scope>
    <scope>PROTEIN SEQUENCE OF 51-62</scope>
    <scope>ACTIVITY REGULATION</scope>
    <source>
        <strain>cv. Alaska</strain>
    </source>
</reference>
<reference key="3">
    <citation type="journal article" date="2001" name="J. Biol. Chem.">
        <title>Chloroplast RNA editing required for functional acetyl-CoA carboxylase in plants.</title>
        <authorList>
            <person name="Sasaki Y."/>
            <person name="Kozaki A."/>
            <person name="Ohmori A."/>
            <person name="Iguchi H."/>
            <person name="Nagano Y."/>
        </authorList>
    </citation>
    <scope>BIOPHYSICOCHEMICAL PROPERTIES</scope>
</reference>
<reference key="4">
    <citation type="journal article" date="2001" name="J. Biol. Chem.">
        <title>Thiol-disulfide exchange between nuclear-encoded and chloroplast-encoded subunits of pea acetyl-CoA carboxylase.</title>
        <authorList>
            <person name="Kozaki A."/>
            <person name="Mayumi K."/>
            <person name="Sasaki Y."/>
        </authorList>
    </citation>
    <scope>ACTIVITY REGULATION</scope>
    <scope>DISULFIDE BOND</scope>
    <scope>MUTAGENESIS OF CYS-297 AND CYS-317</scope>
</reference>
<reference key="5">
    <citation type="journal article" date="2002" name="Arch. Biochem. Biophys.">
        <title>The multisubunit acetyl-CoA carboxylase is strongly associated with the chloroplast envelope through non-ionic interactions to the carboxyltransferase subunits.</title>
        <authorList>
            <person name="Thelen J.J."/>
            <person name="Ohlrogge J.B."/>
        </authorList>
    </citation>
    <scope>SUBCELLULAR LOCATION</scope>
    <scope>SUBUNIT</scope>
    <scope>DEVELOPMENTAL STAGE</scope>
    <source>
        <strain>cv. Little Marvel</strain>
    </source>
</reference>
<gene>
    <name type="primary">ACCA</name>
</gene>
<organism>
    <name type="scientific">Pisum sativum</name>
    <name type="common">Garden pea</name>
    <name type="synonym">Lathyrus oleraceus</name>
    <dbReference type="NCBI Taxonomy" id="3888"/>
    <lineage>
        <taxon>Eukaryota</taxon>
        <taxon>Viridiplantae</taxon>
        <taxon>Streptophyta</taxon>
        <taxon>Embryophyta</taxon>
        <taxon>Tracheophyta</taxon>
        <taxon>Spermatophyta</taxon>
        <taxon>Magnoliopsida</taxon>
        <taxon>eudicotyledons</taxon>
        <taxon>Gunneridae</taxon>
        <taxon>Pentapetalae</taxon>
        <taxon>rosids</taxon>
        <taxon>fabids</taxon>
        <taxon>Fabales</taxon>
        <taxon>Fabaceae</taxon>
        <taxon>Papilionoideae</taxon>
        <taxon>50 kb inversion clade</taxon>
        <taxon>NPAAA clade</taxon>
        <taxon>Hologalegina</taxon>
        <taxon>IRL clade</taxon>
        <taxon>Fabeae</taxon>
        <taxon>Pisum</taxon>
    </lineage>
</organism>
<proteinExistence type="evidence at protein level"/>
<sequence length="875" mass="96421">MASSSATLVGSTASDLLRSSTTGFTGVPLRTLGRAGLVLKRRDLTVSVTAKLRKVKRREYPWSSNPDPNMKGGRLRHLSTFQPLKQPPKPVILEFEKPLINMEKKINDFRKVAEKTGVDLSDQILALEAKYQKALVELYTNLTPIQRVTVARHPNRPTFLDHMYNMTEKFVELHGDREGYDDPAIAAGLGSIDGKTYMFIGHQKGRDTKENIKRNFAMPTPHGYRKALRLMEYADHHGFPIVTFIDTPGAFADLKSEQLGQGEAIAHNLRSMFALKVPVISIVIGEGGSGGALAIGCANKLLMLENSVFFVAMPEACGAILWKSNKAAPKAAERLKITASALLDLEIADGIIPEPLAGAHTDPSWMSQQIKIAINEAMDELTKLSTEDLIKDRMHKFRKLGVDGIQEGIPLVPSKKVNTKKREIGVPPKRQEVPIPDSQIEAEIEKLKKAIFEGEDSSAAKKNPGSQIGSAIDKLKGLFLEGKDSSAAKKTPGSQIVAELDKLKGLYLEAKDSSAAKVPGSQIVAEIEKLKNSIFEDEDSSSAVLPEKIPGSEIAVEIAKLKKNILEGKDSSSEPSKLDLDKTIETLKREVNREFSEAVKAAGLTKTLTKLRGEISKAKAGNQPLTPLLKVEIKSFNQRLSAAPNSRKLLKKRGLLREVTKVKLLLDKNKAATRKQELKKKSDEHKEAARLEQELKKKFDEVMDTPRIKEKYEALRSEVRRVDASSGSGLDDELKKKIIEFNKEVDLELATAVKSVGLEVESVKPGHGWNKSSVPEIEELNKDVQKEIEIVANSSPNVKRLIEQLKLEVAKSGGKPDSESKSRIDALTQQIKKSLAEAVDSPSLKEKYENLTRPAGDTLTDDKLREKVGVNRNFS</sequence>
<feature type="transit peptide" description="Chloroplast" evidence="5">
    <location>
        <begin position="1"/>
        <end position="50"/>
    </location>
</feature>
<feature type="chain" id="PRO_0000389652" description="Acetyl-coenzyme A carboxylase carboxyl transferase subunit alpha, chloroplastic">
    <location>
        <begin position="51"/>
        <end position="875"/>
    </location>
</feature>
<feature type="domain" description="CoA carboxyltransferase C-terminal" evidence="3">
    <location>
        <begin position="128"/>
        <end position="380"/>
    </location>
</feature>
<feature type="region of interest" description="Disordered" evidence="4">
    <location>
        <begin position="845"/>
        <end position="875"/>
    </location>
</feature>
<feature type="coiled-coil region" evidence="2">
    <location>
        <begin position="664"/>
        <end position="705"/>
    </location>
</feature>
<feature type="compositionally biased region" description="Basic and acidic residues" evidence="4">
    <location>
        <begin position="860"/>
        <end position="869"/>
    </location>
</feature>
<feature type="disulfide bond" description="Interchain (with C-442 in beta subunit)" evidence="11">
    <location>
        <position position="317"/>
    </location>
</feature>
<feature type="sequence variant" description="In strain: cv. Miranda." evidence="9">
    <original>M</original>
    <variation>S</variation>
    <location>
        <position position="313"/>
    </location>
</feature>
<feature type="sequence variant" description="In strain: cv. Miranda." evidence="9">
    <original>F</original>
    <variation>L</variation>
    <location>
        <position position="452"/>
    </location>
</feature>
<feature type="sequence variant" description="In strain: cv. Miranda." evidence="9">
    <original>V</original>
    <variation>E</variation>
    <location>
        <position position="631"/>
    </location>
</feature>
<feature type="mutagenesis site" description="Loss of 30% of carboxyltransferase activity in E.coli." evidence="7">
    <original>C</original>
    <variation>A</variation>
    <location>
        <position position="297"/>
    </location>
</feature>
<feature type="mutagenesis site" description="Loss of redox control, also 20% loss of carboxyltransferase activity in E.coli." evidence="7">
    <original>C</original>
    <variation>A</variation>
    <location>
        <position position="317"/>
    </location>
</feature>
<name>ACCA_PEA</name>
<comment type="function">
    <text evidence="1">Component of the acetyl coenzyme A carboxylase (ACC) complex. First, biotin carboxylase catalyzes the carboxylation of biotin on its carrier protein (BCCP) and then the CO(2) group is transferred by the carboxyltransferase to acetyl-CoA to form malonyl-CoA (By similarity).</text>
</comment>
<comment type="catalytic activity">
    <reaction>
        <text>N(6)-carboxybiotinyl-L-lysyl-[protein] + acetyl-CoA = N(6)-biotinyl-L-lysyl-[protein] + malonyl-CoA</text>
        <dbReference type="Rhea" id="RHEA:54728"/>
        <dbReference type="Rhea" id="RHEA-COMP:10505"/>
        <dbReference type="Rhea" id="RHEA-COMP:10506"/>
        <dbReference type="ChEBI" id="CHEBI:57288"/>
        <dbReference type="ChEBI" id="CHEBI:57384"/>
        <dbReference type="ChEBI" id="CHEBI:83144"/>
        <dbReference type="ChEBI" id="CHEBI:83145"/>
        <dbReference type="EC" id="2.1.3.15"/>
    </reaction>
</comment>
<comment type="activity regulation">
    <text evidence="5 7">Activated by reductants such as dithiothreitol (DTT), and by thioredoxin in vivo, following exposure to light.</text>
</comment>
<comment type="biophysicochemical properties">
    <kinetics>
        <Vmax evidence="6">151.0 nmol/min/mg enzyme</Vmax>
    </kinetics>
</comment>
<comment type="pathway">
    <text>Lipid metabolism; malonyl-CoA biosynthesis; malonyl-CoA from acetyl-CoA: step 1/1.</text>
</comment>
<comment type="subunit">
    <text evidence="12">Acetyl-CoA carboxylase is a heterohexamer composed of biotin carboxyl carrier protein, biotin carboxylase and two subunits each of ACCase subunit alpha and ACCase plastid-coded subunit beta (accD).</text>
</comment>
<comment type="subcellular location">
    <subcellularLocation>
        <location evidence="12 13">Plastid</location>
        <location evidence="12 13">Chloroplast inner membrane</location>
        <topology evidence="12 13">Peripheral membrane protein</topology>
        <orientation evidence="12 13">Stromal side</orientation>
    </subcellularLocation>
</comment>
<comment type="developmental stage">
    <text evidence="8">Activity is highest in chloroplasts isolated from young, actively dividing leaves (at protein level).</text>
</comment>
<comment type="similarity">
    <text evidence="10">Belongs to the AccA family.</text>
</comment>